<dbReference type="EC" id="2.3.1.193" evidence="1"/>
<dbReference type="EMBL" id="CP000266">
    <property type="protein sequence ID" value="ABF04622.1"/>
    <property type="molecule type" value="Genomic_DNA"/>
</dbReference>
<dbReference type="RefSeq" id="WP_000829377.1">
    <property type="nucleotide sequence ID" value="NC_008258.1"/>
</dbReference>
<dbReference type="SMR" id="Q0T243"/>
<dbReference type="KEGG" id="sfv:SFV_2519"/>
<dbReference type="HOGENOM" id="CLU_004652_1_1_6"/>
<dbReference type="Proteomes" id="UP000000659">
    <property type="component" value="Chromosome"/>
</dbReference>
<dbReference type="GO" id="GO:0005737">
    <property type="term" value="C:cytoplasm"/>
    <property type="evidence" value="ECO:0007669"/>
    <property type="project" value="UniProtKB-SubCell"/>
</dbReference>
<dbReference type="GO" id="GO:1990883">
    <property type="term" value="F:18S rRNA cytidine N-acetyltransferase activity"/>
    <property type="evidence" value="ECO:0007669"/>
    <property type="project" value="TreeGrafter"/>
</dbReference>
<dbReference type="GO" id="GO:0005524">
    <property type="term" value="F:ATP binding"/>
    <property type="evidence" value="ECO:0007669"/>
    <property type="project" value="UniProtKB-UniRule"/>
</dbReference>
<dbReference type="GO" id="GO:0000049">
    <property type="term" value="F:tRNA binding"/>
    <property type="evidence" value="ECO:0007669"/>
    <property type="project" value="UniProtKB-UniRule"/>
</dbReference>
<dbReference type="GO" id="GO:0051392">
    <property type="term" value="F:tRNA N4-acetyltransferase activity"/>
    <property type="evidence" value="ECO:0007669"/>
    <property type="project" value="UniProtKB-UniRule"/>
</dbReference>
<dbReference type="GO" id="GO:1904812">
    <property type="term" value="P:rRNA acetylation involved in maturation of SSU-rRNA"/>
    <property type="evidence" value="ECO:0007669"/>
    <property type="project" value="TreeGrafter"/>
</dbReference>
<dbReference type="GO" id="GO:0051391">
    <property type="term" value="P:tRNA acetylation"/>
    <property type="evidence" value="ECO:0007669"/>
    <property type="project" value="UniProtKB-UniRule"/>
</dbReference>
<dbReference type="GO" id="GO:0002101">
    <property type="term" value="P:tRNA wobble cytosine modification"/>
    <property type="evidence" value="ECO:0007669"/>
    <property type="project" value="UniProtKB-UniRule"/>
</dbReference>
<dbReference type="FunFam" id="1.20.120.890:FF:000001">
    <property type="entry name" value="tRNA(Met) cytidine acetyltransferase TmcA"/>
    <property type="match status" value="1"/>
</dbReference>
<dbReference type="FunFam" id="3.40.50.11040:FF:000003">
    <property type="entry name" value="tRNA(Met) cytidine acetyltransferase TmcA"/>
    <property type="match status" value="1"/>
</dbReference>
<dbReference type="FunFam" id="3.40.50.300:FF:001011">
    <property type="entry name" value="tRNA(Met) cytidine acetyltransferase TmcA"/>
    <property type="match status" value="1"/>
</dbReference>
<dbReference type="FunFam" id="3.40.630.30:FF:000054">
    <property type="entry name" value="tRNA(Met) cytidine acetyltransferase TmcA"/>
    <property type="match status" value="1"/>
</dbReference>
<dbReference type="Gene3D" id="3.40.50.11040">
    <property type="match status" value="1"/>
</dbReference>
<dbReference type="Gene3D" id="3.40.630.30">
    <property type="match status" value="1"/>
</dbReference>
<dbReference type="Gene3D" id="3.40.50.300">
    <property type="entry name" value="P-loop containing nucleotide triphosphate hydrolases"/>
    <property type="match status" value="1"/>
</dbReference>
<dbReference type="Gene3D" id="1.20.120.890">
    <property type="entry name" value="tRNA(Met) cytidine acetyltransferase, tail domain"/>
    <property type="match status" value="1"/>
</dbReference>
<dbReference type="HAMAP" id="MF_01886">
    <property type="entry name" value="tRNA_acetyltr_TmcA"/>
    <property type="match status" value="1"/>
</dbReference>
<dbReference type="InterPro" id="IPR016181">
    <property type="entry name" value="Acyl_CoA_acyltransferase"/>
</dbReference>
<dbReference type="InterPro" id="IPR000182">
    <property type="entry name" value="GNAT_dom"/>
</dbReference>
<dbReference type="InterPro" id="IPR007807">
    <property type="entry name" value="NAT10/TcmA_helicase"/>
</dbReference>
<dbReference type="InterPro" id="IPR027417">
    <property type="entry name" value="P-loop_NTPase"/>
</dbReference>
<dbReference type="InterPro" id="IPR032672">
    <property type="entry name" value="TmcA/NAT10/Kre33"/>
</dbReference>
<dbReference type="InterPro" id="IPR038321">
    <property type="entry name" value="TmcA_C_sf"/>
</dbReference>
<dbReference type="InterPro" id="IPR013562">
    <property type="entry name" value="TmcA_N"/>
</dbReference>
<dbReference type="InterPro" id="IPR033442">
    <property type="entry name" value="TmcA_tRNA_bind"/>
</dbReference>
<dbReference type="InterPro" id="IPR024914">
    <property type="entry name" value="tRNA_acetyltr_TmcA"/>
</dbReference>
<dbReference type="PANTHER" id="PTHR10925">
    <property type="entry name" value="N-ACETYLTRANSFERASE 10"/>
    <property type="match status" value="1"/>
</dbReference>
<dbReference type="PANTHER" id="PTHR10925:SF5">
    <property type="entry name" value="RNA CYTIDINE ACETYLTRANSFERASE"/>
    <property type="match status" value="1"/>
</dbReference>
<dbReference type="Pfam" id="PF13718">
    <property type="entry name" value="GNAT_acetyltr_2"/>
    <property type="match status" value="1"/>
</dbReference>
<dbReference type="Pfam" id="PF05127">
    <property type="entry name" value="NAT10_TcmA_helicase"/>
    <property type="match status" value="1"/>
</dbReference>
<dbReference type="Pfam" id="PF08351">
    <property type="entry name" value="TmcA_N"/>
    <property type="match status" value="1"/>
</dbReference>
<dbReference type="Pfam" id="PF17176">
    <property type="entry name" value="tRNA_bind_3"/>
    <property type="match status" value="1"/>
</dbReference>
<dbReference type="SUPFAM" id="SSF55729">
    <property type="entry name" value="Acyl-CoA N-acyltransferases (Nat)"/>
    <property type="match status" value="1"/>
</dbReference>
<dbReference type="SUPFAM" id="SSF52540">
    <property type="entry name" value="P-loop containing nucleoside triphosphate hydrolases"/>
    <property type="match status" value="1"/>
</dbReference>
<dbReference type="PROSITE" id="PS51186">
    <property type="entry name" value="GNAT"/>
    <property type="match status" value="1"/>
</dbReference>
<gene>
    <name evidence="1" type="primary">tmcA</name>
    <name type="ordered locus">SFV_2519</name>
</gene>
<name>TMCA_SHIF8</name>
<feature type="chain" id="PRO_0000403125" description="tRNA(Met) cytidine acetyltransferase TmcA">
    <location>
        <begin position="1"/>
        <end position="671"/>
    </location>
</feature>
<feature type="domain" description="N-acetyltransferase" evidence="1">
    <location>
        <begin position="356"/>
        <end position="531"/>
    </location>
</feature>
<feature type="binding site" evidence="1">
    <location>
        <position position="180"/>
    </location>
    <ligand>
        <name>ATP</name>
        <dbReference type="ChEBI" id="CHEBI:30616"/>
    </ligand>
</feature>
<feature type="binding site" evidence="1">
    <location>
        <begin position="202"/>
        <end position="211"/>
    </location>
    <ligand>
        <name>ATP</name>
        <dbReference type="ChEBI" id="CHEBI:30616"/>
    </ligand>
</feature>
<feature type="binding site" evidence="1">
    <location>
        <position position="319"/>
    </location>
    <ligand>
        <name>ATP</name>
        <dbReference type="ChEBI" id="CHEBI:30616"/>
    </ligand>
</feature>
<feature type="binding site" evidence="1">
    <location>
        <begin position="461"/>
        <end position="463"/>
    </location>
    <ligand>
        <name>acetyl-CoA</name>
        <dbReference type="ChEBI" id="CHEBI:57288"/>
    </ligand>
</feature>
<feature type="binding site" evidence="1">
    <location>
        <begin position="468"/>
        <end position="474"/>
    </location>
    <ligand>
        <name>acetyl-CoA</name>
        <dbReference type="ChEBI" id="CHEBI:57288"/>
    </ligand>
</feature>
<feature type="binding site" evidence="1">
    <location>
        <position position="499"/>
    </location>
    <ligand>
        <name>acetyl-CoA</name>
        <dbReference type="ChEBI" id="CHEBI:57288"/>
    </ligand>
</feature>
<feature type="binding site" evidence="1">
    <location>
        <position position="506"/>
    </location>
    <ligand>
        <name>acetyl-CoA</name>
        <dbReference type="ChEBI" id="CHEBI:57288"/>
    </ligand>
</feature>
<sequence length="671" mass="74809">MAELTALYTLTAQMKREGICRLLVLSGEEGWCFDHALKLRDALPGDWLWISPQLDAENHCSPSALQTLLGREFRHAVFDARHGFDAAAFAALSGTLKAGSWLVLLLPVWEEWENQPDADSLRWSDCPDPIATPHFVQHLKRVLTADNDAILWRQNQPFSLAHFTPRTDWHPATGAPQPEQQQLLQQLLTMPPGVAAVTAARGRGKSALAGQLISRIAGSAIVTAPAKAATDVLAQFAGEKFRFIAPDALLASDEQADWLVVDEAAAIPAPLLHQLVSRFPRTLLTTTVQGYEGTGRGFLLKFCARFPHLHRFELQQPIRWAQGCPLEKMVSEALVFNDENFTHTPQGNIVISAFEQTLWRSEPETPLKVYQLLSGAHYRTLPLDLRRMMDAPGQHFLQAAGENEIAGALWLVDEGGLSQELSQAVWAGFRRPRGNLVAQSLAAHGSNPLAATLRGRRVSRIAVHPARQREGTGRQLIAGALQYTHDLDYLSVSFGYTGELWRFWQRCGFVLVRMGNHREASSGCYTAMALLPMSDAGKQLAEREHYRLRRDAQALAQWNGEMLPVDPLNDAILSDDDWLELAGFAFAHRPLLTSLGCLLRLLQTSELALPALRGRLQKNASDAQLCTTLKLSGRKMLLVRQREEAAQALFALNEVRTERLRDRITQWQFFH</sequence>
<evidence type="ECO:0000255" key="1">
    <source>
        <dbReference type="HAMAP-Rule" id="MF_01886"/>
    </source>
</evidence>
<reference key="1">
    <citation type="journal article" date="2006" name="BMC Genomics">
        <title>Complete genome sequence of Shigella flexneri 5b and comparison with Shigella flexneri 2a.</title>
        <authorList>
            <person name="Nie H."/>
            <person name="Yang F."/>
            <person name="Zhang X."/>
            <person name="Yang J."/>
            <person name="Chen L."/>
            <person name="Wang J."/>
            <person name="Xiong Z."/>
            <person name="Peng J."/>
            <person name="Sun L."/>
            <person name="Dong J."/>
            <person name="Xue Y."/>
            <person name="Xu X."/>
            <person name="Chen S."/>
            <person name="Yao Z."/>
            <person name="Shen Y."/>
            <person name="Jin Q."/>
        </authorList>
    </citation>
    <scope>NUCLEOTIDE SEQUENCE [LARGE SCALE GENOMIC DNA]</scope>
    <source>
        <strain>8401</strain>
    </source>
</reference>
<accession>Q0T243</accession>
<proteinExistence type="inferred from homology"/>
<comment type="function">
    <text evidence="1">Catalyzes the formation of N(4)-acetylcytidine (ac(4)C) at the wobble position of tRNA(Met), by using acetyl-CoA as an acetyl donor and ATP (or GTP).</text>
</comment>
<comment type="catalytic activity">
    <reaction evidence="1">
        <text>cytidine(34) in elongator tRNA(Met) + acetyl-CoA + ATP + H2O = N(4)-acetylcytidine(34) in elongator tRNA(Met) + ADP + phosphate + CoA + H(+)</text>
        <dbReference type="Rhea" id="RHEA:43788"/>
        <dbReference type="Rhea" id="RHEA-COMP:10693"/>
        <dbReference type="Rhea" id="RHEA-COMP:10694"/>
        <dbReference type="ChEBI" id="CHEBI:15377"/>
        <dbReference type="ChEBI" id="CHEBI:15378"/>
        <dbReference type="ChEBI" id="CHEBI:30616"/>
        <dbReference type="ChEBI" id="CHEBI:43474"/>
        <dbReference type="ChEBI" id="CHEBI:57287"/>
        <dbReference type="ChEBI" id="CHEBI:57288"/>
        <dbReference type="ChEBI" id="CHEBI:74900"/>
        <dbReference type="ChEBI" id="CHEBI:82748"/>
        <dbReference type="ChEBI" id="CHEBI:456216"/>
        <dbReference type="EC" id="2.3.1.193"/>
    </reaction>
</comment>
<comment type="subcellular location">
    <subcellularLocation>
        <location evidence="1">Cytoplasm</location>
    </subcellularLocation>
</comment>
<comment type="similarity">
    <text evidence="1">Belongs to the RNA cytidine acetyltransferase family. TmcA subfamily.</text>
</comment>
<protein>
    <recommendedName>
        <fullName evidence="1">tRNA(Met) cytidine acetyltransferase TmcA</fullName>
        <ecNumber evidence="1">2.3.1.193</ecNumber>
    </recommendedName>
</protein>
<keyword id="KW-0012">Acyltransferase</keyword>
<keyword id="KW-0067">ATP-binding</keyword>
<keyword id="KW-0963">Cytoplasm</keyword>
<keyword id="KW-0547">Nucleotide-binding</keyword>
<keyword id="KW-0694">RNA-binding</keyword>
<keyword id="KW-0808">Transferase</keyword>
<keyword id="KW-0819">tRNA processing</keyword>
<keyword id="KW-0820">tRNA-binding</keyword>
<organism>
    <name type="scientific">Shigella flexneri serotype 5b (strain 8401)</name>
    <dbReference type="NCBI Taxonomy" id="373384"/>
    <lineage>
        <taxon>Bacteria</taxon>
        <taxon>Pseudomonadati</taxon>
        <taxon>Pseudomonadota</taxon>
        <taxon>Gammaproteobacteria</taxon>
        <taxon>Enterobacterales</taxon>
        <taxon>Enterobacteriaceae</taxon>
        <taxon>Shigella</taxon>
    </lineage>
</organism>